<name>DPO4_STRP1</name>
<keyword id="KW-0963">Cytoplasm</keyword>
<keyword id="KW-0227">DNA damage</keyword>
<keyword id="KW-0234">DNA repair</keyword>
<keyword id="KW-0235">DNA replication</keyword>
<keyword id="KW-0238">DNA-binding</keyword>
<keyword id="KW-0239">DNA-directed DNA polymerase</keyword>
<keyword id="KW-0460">Magnesium</keyword>
<keyword id="KW-0479">Metal-binding</keyword>
<keyword id="KW-0515">Mutator protein</keyword>
<keyword id="KW-0548">Nucleotidyltransferase</keyword>
<keyword id="KW-1185">Reference proteome</keyword>
<keyword id="KW-0808">Transferase</keyword>
<dbReference type="EC" id="2.7.7.7" evidence="1"/>
<dbReference type="EMBL" id="AE004092">
    <property type="protein sequence ID" value="AAK34566.2"/>
    <property type="molecule type" value="Genomic_DNA"/>
</dbReference>
<dbReference type="EMBL" id="CP000017">
    <property type="protein sequence ID" value="AAZ52186.1"/>
    <property type="molecule type" value="Genomic_DNA"/>
</dbReference>
<dbReference type="RefSeq" id="NP_269845.2">
    <property type="nucleotide sequence ID" value="NC_002737.2"/>
</dbReference>
<dbReference type="SMR" id="Q99Y66"/>
<dbReference type="PaxDb" id="1314-HKU360_01690"/>
<dbReference type="KEGG" id="spy:SPy_1846"/>
<dbReference type="KEGG" id="spz:M5005_Spy1568"/>
<dbReference type="PATRIC" id="fig|160490.10.peg.1603"/>
<dbReference type="HOGENOM" id="CLU_012348_1_2_9"/>
<dbReference type="Proteomes" id="UP000000750">
    <property type="component" value="Chromosome"/>
</dbReference>
<dbReference type="GO" id="GO:0005829">
    <property type="term" value="C:cytosol"/>
    <property type="evidence" value="ECO:0007669"/>
    <property type="project" value="TreeGrafter"/>
</dbReference>
<dbReference type="GO" id="GO:0003684">
    <property type="term" value="F:damaged DNA binding"/>
    <property type="evidence" value="ECO:0007669"/>
    <property type="project" value="InterPro"/>
</dbReference>
<dbReference type="GO" id="GO:0003887">
    <property type="term" value="F:DNA-directed DNA polymerase activity"/>
    <property type="evidence" value="ECO:0007669"/>
    <property type="project" value="UniProtKB-UniRule"/>
</dbReference>
<dbReference type="GO" id="GO:0000287">
    <property type="term" value="F:magnesium ion binding"/>
    <property type="evidence" value="ECO:0007669"/>
    <property type="project" value="UniProtKB-UniRule"/>
</dbReference>
<dbReference type="GO" id="GO:0006261">
    <property type="term" value="P:DNA-templated DNA replication"/>
    <property type="evidence" value="ECO:0007669"/>
    <property type="project" value="UniProtKB-UniRule"/>
</dbReference>
<dbReference type="GO" id="GO:0042276">
    <property type="term" value="P:error-prone translesion synthesis"/>
    <property type="evidence" value="ECO:0007669"/>
    <property type="project" value="TreeGrafter"/>
</dbReference>
<dbReference type="GO" id="GO:0009432">
    <property type="term" value="P:SOS response"/>
    <property type="evidence" value="ECO:0007669"/>
    <property type="project" value="TreeGrafter"/>
</dbReference>
<dbReference type="CDD" id="cd03586">
    <property type="entry name" value="PolY_Pol_IV_kappa"/>
    <property type="match status" value="1"/>
</dbReference>
<dbReference type="FunFam" id="3.30.1490.100:FF:000004">
    <property type="entry name" value="DNA polymerase IV"/>
    <property type="match status" value="1"/>
</dbReference>
<dbReference type="FunFam" id="3.40.1170.60:FF:000001">
    <property type="entry name" value="DNA polymerase IV"/>
    <property type="match status" value="1"/>
</dbReference>
<dbReference type="Gene3D" id="3.30.70.270">
    <property type="match status" value="1"/>
</dbReference>
<dbReference type="Gene3D" id="3.40.1170.60">
    <property type="match status" value="1"/>
</dbReference>
<dbReference type="Gene3D" id="1.10.150.20">
    <property type="entry name" value="5' to 3' exonuclease, C-terminal subdomain"/>
    <property type="match status" value="1"/>
</dbReference>
<dbReference type="Gene3D" id="3.30.1490.100">
    <property type="entry name" value="DNA polymerase, Y-family, little finger domain"/>
    <property type="match status" value="1"/>
</dbReference>
<dbReference type="HAMAP" id="MF_01113">
    <property type="entry name" value="DNApol_IV"/>
    <property type="match status" value="1"/>
</dbReference>
<dbReference type="InterPro" id="IPR043502">
    <property type="entry name" value="DNA/RNA_pol_sf"/>
</dbReference>
<dbReference type="InterPro" id="IPR036775">
    <property type="entry name" value="DNA_pol_Y-fam_lit_finger_sf"/>
</dbReference>
<dbReference type="InterPro" id="IPR017961">
    <property type="entry name" value="DNA_pol_Y-fam_little_finger"/>
</dbReference>
<dbReference type="InterPro" id="IPR050116">
    <property type="entry name" value="DNA_polymerase-Y"/>
</dbReference>
<dbReference type="InterPro" id="IPR022880">
    <property type="entry name" value="DNApol_IV"/>
</dbReference>
<dbReference type="InterPro" id="IPR024728">
    <property type="entry name" value="PolY_HhH_motif"/>
</dbReference>
<dbReference type="InterPro" id="IPR043128">
    <property type="entry name" value="Rev_trsase/Diguanyl_cyclase"/>
</dbReference>
<dbReference type="InterPro" id="IPR001126">
    <property type="entry name" value="UmuC"/>
</dbReference>
<dbReference type="NCBIfam" id="NF002677">
    <property type="entry name" value="PRK02406.1"/>
    <property type="match status" value="1"/>
</dbReference>
<dbReference type="PANTHER" id="PTHR11076:SF33">
    <property type="entry name" value="DNA POLYMERASE KAPPA"/>
    <property type="match status" value="1"/>
</dbReference>
<dbReference type="PANTHER" id="PTHR11076">
    <property type="entry name" value="DNA REPAIR POLYMERASE UMUC / TRANSFERASE FAMILY MEMBER"/>
    <property type="match status" value="1"/>
</dbReference>
<dbReference type="Pfam" id="PF00817">
    <property type="entry name" value="IMS"/>
    <property type="match status" value="1"/>
</dbReference>
<dbReference type="Pfam" id="PF11799">
    <property type="entry name" value="IMS_C"/>
    <property type="match status" value="1"/>
</dbReference>
<dbReference type="Pfam" id="PF11798">
    <property type="entry name" value="IMS_HHH"/>
    <property type="match status" value="1"/>
</dbReference>
<dbReference type="SUPFAM" id="SSF56672">
    <property type="entry name" value="DNA/RNA polymerases"/>
    <property type="match status" value="1"/>
</dbReference>
<dbReference type="SUPFAM" id="SSF100879">
    <property type="entry name" value="Lesion bypass DNA polymerase (Y-family), little finger domain"/>
    <property type="match status" value="1"/>
</dbReference>
<dbReference type="PROSITE" id="PS50173">
    <property type="entry name" value="UMUC"/>
    <property type="match status" value="1"/>
</dbReference>
<gene>
    <name evidence="1" type="primary">dinB</name>
    <name type="synonym">dinP</name>
    <name type="ordered locus">SPy_1846</name>
    <name type="ordered locus">M5005_Spy1568</name>
</gene>
<proteinExistence type="inferred from homology"/>
<sequence>MLIFPLINDTSRKIIHIDMDAFFAAVEERDNPALKGKPVVIGKDPRETGGRGVVSTCNYEARKYGIHSAMSSKEAYERCPKAIFISGNYEKYRTVGDQIRRIFKRYTDVVEPMSIDEAYLDVTDNKLGIKSAVKIAKLIQHDIWKEVGLTCSAGVSYNKFLAKLASDFEKPHGLTLVLKEDALCFLAKLPIEKFHGVGKKSVKKLHDMGIYTGQDLLAVPEMTLIDHFGRFGFDLYRKARGISNSPVKSDRIRKSIGSERTYAKLLYQETDIKAEISKNVKRVAALLQDHKKLGKTIVLKVRYADFTTLTKRVTLPELTRNAAQIEQVAGDIFDSLSENPAGIRLLGVTMTNLEDKVADISLDL</sequence>
<feature type="chain" id="PRO_0000173956" description="DNA polymerase IV">
    <location>
        <begin position="1"/>
        <end position="364"/>
    </location>
</feature>
<feature type="domain" description="UmuC" evidence="1">
    <location>
        <begin position="14"/>
        <end position="198"/>
    </location>
</feature>
<feature type="active site" evidence="1">
    <location>
        <position position="117"/>
    </location>
</feature>
<feature type="binding site" evidence="1">
    <location>
        <position position="18"/>
    </location>
    <ligand>
        <name>Mg(2+)</name>
        <dbReference type="ChEBI" id="CHEBI:18420"/>
    </ligand>
</feature>
<feature type="binding site" evidence="1">
    <location>
        <position position="116"/>
    </location>
    <ligand>
        <name>Mg(2+)</name>
        <dbReference type="ChEBI" id="CHEBI:18420"/>
    </ligand>
</feature>
<feature type="site" description="Substrate discrimination" evidence="1">
    <location>
        <position position="23"/>
    </location>
</feature>
<comment type="function">
    <text evidence="1">Poorly processive, error-prone DNA polymerase involved in untargeted mutagenesis. Copies undamaged DNA at stalled replication forks, which arise in vivo from mismatched or misaligned primer ends. These misaligned primers can be extended by PolIV. Exhibits no 3'-5' exonuclease (proofreading) activity. May be involved in translesional synthesis, in conjunction with the beta clamp from PolIII.</text>
</comment>
<comment type="catalytic activity">
    <reaction evidence="1">
        <text>DNA(n) + a 2'-deoxyribonucleoside 5'-triphosphate = DNA(n+1) + diphosphate</text>
        <dbReference type="Rhea" id="RHEA:22508"/>
        <dbReference type="Rhea" id="RHEA-COMP:17339"/>
        <dbReference type="Rhea" id="RHEA-COMP:17340"/>
        <dbReference type="ChEBI" id="CHEBI:33019"/>
        <dbReference type="ChEBI" id="CHEBI:61560"/>
        <dbReference type="ChEBI" id="CHEBI:173112"/>
        <dbReference type="EC" id="2.7.7.7"/>
    </reaction>
</comment>
<comment type="cofactor">
    <cofactor evidence="1">
        <name>Mg(2+)</name>
        <dbReference type="ChEBI" id="CHEBI:18420"/>
    </cofactor>
    <text evidence="1">Binds 2 magnesium ions per subunit.</text>
</comment>
<comment type="subunit">
    <text evidence="1">Monomer.</text>
</comment>
<comment type="subcellular location">
    <subcellularLocation>
        <location evidence="1">Cytoplasm</location>
    </subcellularLocation>
</comment>
<comment type="similarity">
    <text evidence="1">Belongs to the DNA polymerase type-Y family.</text>
</comment>
<accession>Q99Y66</accession>
<accession>Q48WT9</accession>
<reference key="1">
    <citation type="journal article" date="2001" name="Proc. Natl. Acad. Sci. U.S.A.">
        <title>Complete genome sequence of an M1 strain of Streptococcus pyogenes.</title>
        <authorList>
            <person name="Ferretti J.J."/>
            <person name="McShan W.M."/>
            <person name="Ajdic D.J."/>
            <person name="Savic D.J."/>
            <person name="Savic G."/>
            <person name="Lyon K."/>
            <person name="Primeaux C."/>
            <person name="Sezate S."/>
            <person name="Suvorov A.N."/>
            <person name="Kenton S."/>
            <person name="Lai H.S."/>
            <person name="Lin S.P."/>
            <person name="Qian Y."/>
            <person name="Jia H.G."/>
            <person name="Najar F.Z."/>
            <person name="Ren Q."/>
            <person name="Zhu H."/>
            <person name="Song L."/>
            <person name="White J."/>
            <person name="Yuan X."/>
            <person name="Clifton S.W."/>
            <person name="Roe B.A."/>
            <person name="McLaughlin R.E."/>
        </authorList>
    </citation>
    <scope>NUCLEOTIDE SEQUENCE [LARGE SCALE GENOMIC DNA]</scope>
    <source>
        <strain>ATCC 700294 / SF370 / Serotype M1</strain>
    </source>
</reference>
<reference key="2">
    <citation type="submission" date="2014-04" db="EMBL/GenBank/DDBJ databases">
        <authorList>
            <person name="Beres S.B."/>
            <person name="Musser J.M."/>
        </authorList>
    </citation>
    <scope>SEQUENCE REVISION TO 249</scope>
</reference>
<reference key="3">
    <citation type="journal article" date="2005" name="J. Infect. Dis.">
        <title>Evolutionary origin and emergence of a highly successful clone of serotype M1 group A Streptococcus involved multiple horizontal gene transfer events.</title>
        <authorList>
            <person name="Sumby P."/>
            <person name="Porcella S.F."/>
            <person name="Madrigal A.G."/>
            <person name="Barbian K.D."/>
            <person name="Virtaneva K."/>
            <person name="Ricklefs S.M."/>
            <person name="Sturdevant D.E."/>
            <person name="Graham M.R."/>
            <person name="Vuopio-Varkila J."/>
            <person name="Hoe N.P."/>
            <person name="Musser J.M."/>
        </authorList>
    </citation>
    <scope>NUCLEOTIDE SEQUENCE [LARGE SCALE GENOMIC DNA]</scope>
    <source>
        <strain>ATCC BAA-947 / MGAS5005 / Serotype M1</strain>
    </source>
</reference>
<evidence type="ECO:0000255" key="1">
    <source>
        <dbReference type="HAMAP-Rule" id="MF_01113"/>
    </source>
</evidence>
<protein>
    <recommendedName>
        <fullName evidence="1">DNA polymerase IV</fullName>
        <shortName evidence="1">Pol IV</shortName>
        <ecNumber evidence="1">2.7.7.7</ecNumber>
    </recommendedName>
</protein>
<organism>
    <name type="scientific">Streptococcus pyogenes serotype M1</name>
    <dbReference type="NCBI Taxonomy" id="301447"/>
    <lineage>
        <taxon>Bacteria</taxon>
        <taxon>Bacillati</taxon>
        <taxon>Bacillota</taxon>
        <taxon>Bacilli</taxon>
        <taxon>Lactobacillales</taxon>
        <taxon>Streptococcaceae</taxon>
        <taxon>Streptococcus</taxon>
    </lineage>
</organism>